<gene>
    <name evidence="5" type="primary">ISU1</name>
    <name evidence="9" type="ordered locus">Os01g0662600</name>
    <name evidence="6" type="ordered locus">LOC_Os01g47340</name>
    <name evidence="8" type="ORF">P0671D01.28</name>
</gene>
<comment type="function">
    <text evidence="2 7">Scaffold protein for the de novo synthesis of iron-sulfur (Fe-S) clusters within mitochondria, which is required for maturation of both mitochondrial and cytoplasmic [2Fe-2S] and [4Fe-4S] proteins (Probable). First, a [2Fe-2S] cluster is transiently assembled on the scaffold protein ISCU (ISU1, ISU2 or ISU3). In a second step, the cluster is released from ISCU, transferred to a glutaredoxin, followed by the formation of mitochondrial [2Fe-2S] proteins, the synthesis of [4Fe-4S] clusters and their target-specific insertion into the recipient apoproteins. Cluster assembly on ISCU depends on the function of the cysteine desulfurase complex NFS1-ISD11, which serves as the sulfur donor for cluster synthesis, the iron-binding protein frataxin as the putative iron donor, and the electron transfer chain comprised of ferredoxin reductase and ferredoxin, which receive their electrons from NADH (By similarity).</text>
</comment>
<comment type="cofactor">
    <cofactor evidence="1">
        <name>[2Fe-2S] cluster</name>
        <dbReference type="ChEBI" id="CHEBI:190135"/>
    </cofactor>
    <text evidence="1">Binds 1 [2Fe-2S] cluster per subunit.</text>
</comment>
<comment type="pathway">
    <text evidence="2">Cofactor biosynthesis; iron-sulfur cluster biosynthesis.</text>
</comment>
<comment type="subunit">
    <text evidence="2">Component of the core Fe-S cluster (ISC) assembly machinery.</text>
</comment>
<comment type="subcellular location">
    <subcellularLocation>
        <location evidence="7">Mitochondrion matrix</location>
    </subcellularLocation>
</comment>
<comment type="induction">
    <text evidence="4">Down-regulated in roots when grown under iron deficiency conditions.</text>
</comment>
<comment type="similarity">
    <text evidence="6">Belongs to the NifU family.</text>
</comment>
<evidence type="ECO:0000250" key="1">
    <source>
        <dbReference type="UniProtKB" id="O49627"/>
    </source>
</evidence>
<evidence type="ECO:0000250" key="2">
    <source>
        <dbReference type="UniProtKB" id="Q03020"/>
    </source>
</evidence>
<evidence type="ECO:0000255" key="3"/>
<evidence type="ECO:0000269" key="4">
    <source>
    </source>
</evidence>
<evidence type="ECO:0000303" key="5">
    <source>
    </source>
</evidence>
<evidence type="ECO:0000305" key="6"/>
<evidence type="ECO:0000305" key="7">
    <source>
    </source>
</evidence>
<evidence type="ECO:0000312" key="8">
    <source>
        <dbReference type="EMBL" id="BAB91740.1"/>
    </source>
</evidence>
<evidence type="ECO:0000312" key="9">
    <source>
        <dbReference type="EMBL" id="BAF05697.1"/>
    </source>
</evidence>
<reference key="1">
    <citation type="journal article" date="2002" name="Nature">
        <title>The genome sequence and structure of rice chromosome 1.</title>
        <authorList>
            <person name="Sasaki T."/>
            <person name="Matsumoto T."/>
            <person name="Yamamoto K."/>
            <person name="Sakata K."/>
            <person name="Baba T."/>
            <person name="Katayose Y."/>
            <person name="Wu J."/>
            <person name="Niimura Y."/>
            <person name="Cheng Z."/>
            <person name="Nagamura Y."/>
            <person name="Antonio B.A."/>
            <person name="Kanamori H."/>
            <person name="Hosokawa S."/>
            <person name="Masukawa M."/>
            <person name="Arikawa K."/>
            <person name="Chiden Y."/>
            <person name="Hayashi M."/>
            <person name="Okamoto M."/>
            <person name="Ando T."/>
            <person name="Aoki H."/>
            <person name="Arita K."/>
            <person name="Hamada M."/>
            <person name="Harada C."/>
            <person name="Hijishita S."/>
            <person name="Honda M."/>
            <person name="Ichikawa Y."/>
            <person name="Idonuma A."/>
            <person name="Iijima M."/>
            <person name="Ikeda M."/>
            <person name="Ikeno M."/>
            <person name="Ito S."/>
            <person name="Ito T."/>
            <person name="Ito Y."/>
            <person name="Ito Y."/>
            <person name="Iwabuchi A."/>
            <person name="Kamiya K."/>
            <person name="Karasawa W."/>
            <person name="Katagiri S."/>
            <person name="Kikuta A."/>
            <person name="Kobayashi N."/>
            <person name="Kono I."/>
            <person name="Machita K."/>
            <person name="Maehara T."/>
            <person name="Mizuno H."/>
            <person name="Mizubayashi T."/>
            <person name="Mukai Y."/>
            <person name="Nagasaki H."/>
            <person name="Nakashima M."/>
            <person name="Nakama Y."/>
            <person name="Nakamichi Y."/>
            <person name="Nakamura M."/>
            <person name="Namiki N."/>
            <person name="Negishi M."/>
            <person name="Ohta I."/>
            <person name="Ono N."/>
            <person name="Saji S."/>
            <person name="Sakai K."/>
            <person name="Shibata M."/>
            <person name="Shimokawa T."/>
            <person name="Shomura A."/>
            <person name="Song J."/>
            <person name="Takazaki Y."/>
            <person name="Terasawa K."/>
            <person name="Tsuji K."/>
            <person name="Waki K."/>
            <person name="Yamagata H."/>
            <person name="Yamane H."/>
            <person name="Yoshiki S."/>
            <person name="Yoshihara R."/>
            <person name="Yukawa K."/>
            <person name="Zhong H."/>
            <person name="Iwama H."/>
            <person name="Endo T."/>
            <person name="Ito H."/>
            <person name="Hahn J.H."/>
            <person name="Kim H.-I."/>
            <person name="Eun M.-Y."/>
            <person name="Yano M."/>
            <person name="Jiang J."/>
            <person name="Gojobori T."/>
        </authorList>
    </citation>
    <scope>NUCLEOTIDE SEQUENCE [LARGE SCALE GENOMIC DNA]</scope>
    <source>
        <strain>cv. Nipponbare</strain>
    </source>
</reference>
<reference key="2">
    <citation type="journal article" date="2005" name="Nature">
        <title>The map-based sequence of the rice genome.</title>
        <authorList>
            <consortium name="International rice genome sequencing project (IRGSP)"/>
        </authorList>
    </citation>
    <scope>NUCLEOTIDE SEQUENCE [LARGE SCALE GENOMIC DNA]</scope>
    <source>
        <strain>cv. Nipponbare</strain>
    </source>
</reference>
<reference key="3">
    <citation type="journal article" date="2008" name="Nucleic Acids Res.">
        <title>The rice annotation project database (RAP-DB): 2008 update.</title>
        <authorList>
            <consortium name="The rice annotation project (RAP)"/>
        </authorList>
    </citation>
    <scope>GENOME REANNOTATION</scope>
    <source>
        <strain>cv. Nipponbare</strain>
    </source>
</reference>
<reference key="4">
    <citation type="journal article" date="2013" name="Rice">
        <title>Improvement of the Oryza sativa Nipponbare reference genome using next generation sequence and optical map data.</title>
        <authorList>
            <person name="Kawahara Y."/>
            <person name="de la Bastide M."/>
            <person name="Hamilton J.P."/>
            <person name="Kanamori H."/>
            <person name="McCombie W.R."/>
            <person name="Ouyang S."/>
            <person name="Schwartz D.C."/>
            <person name="Tanaka T."/>
            <person name="Wu J."/>
            <person name="Zhou S."/>
            <person name="Childs K.L."/>
            <person name="Davidson R.M."/>
            <person name="Lin H."/>
            <person name="Quesada-Ocampo L."/>
            <person name="Vaillancourt B."/>
            <person name="Sakai H."/>
            <person name="Lee S.S."/>
            <person name="Kim J."/>
            <person name="Numa H."/>
            <person name="Itoh T."/>
            <person name="Buell C.R."/>
            <person name="Matsumoto T."/>
        </authorList>
    </citation>
    <scope>GENOME REANNOTATION</scope>
    <source>
        <strain>cv. Nipponbare</strain>
    </source>
</reference>
<reference key="5">
    <citation type="journal article" date="2003" name="Science">
        <title>Collection, mapping, and annotation of over 28,000 cDNA clones from japonica rice.</title>
        <authorList>
            <consortium name="The rice full-length cDNA consortium"/>
        </authorList>
    </citation>
    <scope>NUCLEOTIDE SEQUENCE [LARGE SCALE MRNA]</scope>
    <source>
        <strain>cv. Nipponbare</strain>
    </source>
</reference>
<reference key="6">
    <citation type="journal article" date="2009" name="Biotechnol. Lett.">
        <title>Stage- and tissue-specific expression of rice OsIsu1 gene encoding a scaffold protein for mitochondrial iron-sulfur-cluster biogenesis.</title>
        <authorList>
            <person name="Tsugama D."/>
            <person name="Liu S."/>
            <person name="Takano T."/>
        </authorList>
    </citation>
    <scope>FUNCTION</scope>
    <scope>SUBCELLULAR LOCATION</scope>
    <scope>INDUCTION</scope>
</reference>
<protein>
    <recommendedName>
        <fullName>Iron-sulfur cluster assembly protein 1</fullName>
        <shortName evidence="5">OsIsu1</shortName>
    </recommendedName>
</protein>
<proteinExistence type="evidence at transcript level"/>
<feature type="transit peptide" description="Mitochondrion" evidence="3">
    <location>
        <begin position="1"/>
        <end position="55"/>
    </location>
</feature>
<feature type="chain" id="PRO_0000446287" description="Iron-sulfur cluster assembly protein 1">
    <location>
        <begin position="56"/>
        <end position="171"/>
    </location>
</feature>
<accession>Q8LR34</accession>
<dbReference type="EMBL" id="AP003284">
    <property type="protein sequence ID" value="BAB91740.1"/>
    <property type="molecule type" value="Genomic_DNA"/>
</dbReference>
<dbReference type="EMBL" id="AP008207">
    <property type="protein sequence ID" value="BAF05697.1"/>
    <property type="molecule type" value="Genomic_DNA"/>
</dbReference>
<dbReference type="EMBL" id="AP014957">
    <property type="protein sequence ID" value="BAS73546.1"/>
    <property type="molecule type" value="Genomic_DNA"/>
</dbReference>
<dbReference type="EMBL" id="AK062234">
    <property type="protein sequence ID" value="BAG88251.1"/>
    <property type="molecule type" value="mRNA"/>
</dbReference>
<dbReference type="EMBL" id="AK098887">
    <property type="protein sequence ID" value="BAG93794.1"/>
    <property type="molecule type" value="mRNA"/>
</dbReference>
<dbReference type="SMR" id="Q8LR34"/>
<dbReference type="FunCoup" id="Q8LR34">
    <property type="interactions" value="2512"/>
</dbReference>
<dbReference type="STRING" id="39947.Q8LR34"/>
<dbReference type="PaxDb" id="39947-Q8LR34"/>
<dbReference type="EnsemblPlants" id="Os01t0662600-01">
    <property type="protein sequence ID" value="Os01t0662600-01"/>
    <property type="gene ID" value="Os01g0662600"/>
</dbReference>
<dbReference type="EnsemblPlants" id="Os01t0662600-02">
    <property type="protein sequence ID" value="Os01t0662600-02"/>
    <property type="gene ID" value="Os01g0662600"/>
</dbReference>
<dbReference type="Gramene" id="Os01t0662600-01">
    <property type="protein sequence ID" value="Os01t0662600-01"/>
    <property type="gene ID" value="Os01g0662600"/>
</dbReference>
<dbReference type="Gramene" id="Os01t0662600-02">
    <property type="protein sequence ID" value="Os01t0662600-02"/>
    <property type="gene ID" value="Os01g0662600"/>
</dbReference>
<dbReference type="KEGG" id="dosa:Os01g0662600"/>
<dbReference type="KEGG" id="osa:4327858"/>
<dbReference type="eggNOG" id="KOG3361">
    <property type="taxonomic scope" value="Eukaryota"/>
</dbReference>
<dbReference type="HOGENOM" id="CLU_079283_1_2_1"/>
<dbReference type="InParanoid" id="Q8LR34"/>
<dbReference type="OMA" id="SMVTEMV"/>
<dbReference type="OrthoDB" id="1925777at2759"/>
<dbReference type="UniPathway" id="UPA00266"/>
<dbReference type="Proteomes" id="UP000000763">
    <property type="component" value="Chromosome 1"/>
</dbReference>
<dbReference type="Proteomes" id="UP000059680">
    <property type="component" value="Chromosome 1"/>
</dbReference>
<dbReference type="ExpressionAtlas" id="Q8LR34">
    <property type="expression patterns" value="baseline and differential"/>
</dbReference>
<dbReference type="GO" id="GO:0005737">
    <property type="term" value="C:cytoplasm"/>
    <property type="evidence" value="ECO:0000318"/>
    <property type="project" value="GO_Central"/>
</dbReference>
<dbReference type="GO" id="GO:0005759">
    <property type="term" value="C:mitochondrial matrix"/>
    <property type="evidence" value="ECO:0000314"/>
    <property type="project" value="UniProtKB"/>
</dbReference>
<dbReference type="GO" id="GO:0051537">
    <property type="term" value="F:2 iron, 2 sulfur cluster binding"/>
    <property type="evidence" value="ECO:0000318"/>
    <property type="project" value="GO_Central"/>
</dbReference>
<dbReference type="GO" id="GO:0008198">
    <property type="term" value="F:ferrous iron binding"/>
    <property type="evidence" value="ECO:0000318"/>
    <property type="project" value="GO_Central"/>
</dbReference>
<dbReference type="GO" id="GO:0044571">
    <property type="term" value="P:[2Fe-2S] cluster assembly"/>
    <property type="evidence" value="ECO:0000314"/>
    <property type="project" value="UniProtKB"/>
</dbReference>
<dbReference type="GO" id="GO:0044572">
    <property type="term" value="P:[4Fe-4S] cluster assembly"/>
    <property type="evidence" value="ECO:0000314"/>
    <property type="project" value="UniProtKB"/>
</dbReference>
<dbReference type="GO" id="GO:0006879">
    <property type="term" value="P:intracellular iron ion homeostasis"/>
    <property type="evidence" value="ECO:0000318"/>
    <property type="project" value="GO_Central"/>
</dbReference>
<dbReference type="CDD" id="cd06664">
    <property type="entry name" value="IscU_like"/>
    <property type="match status" value="1"/>
</dbReference>
<dbReference type="FunFam" id="3.90.1010.10:FF:000016">
    <property type="entry name" value="Iron-sulfur cluster assembly protein"/>
    <property type="match status" value="1"/>
</dbReference>
<dbReference type="Gene3D" id="3.90.1010.10">
    <property type="match status" value="1"/>
</dbReference>
<dbReference type="InterPro" id="IPR011339">
    <property type="entry name" value="ISCU"/>
</dbReference>
<dbReference type="InterPro" id="IPR002871">
    <property type="entry name" value="NIF_FeS_clus_asmbl_NifU_N"/>
</dbReference>
<dbReference type="NCBIfam" id="TIGR01999">
    <property type="entry name" value="iscU"/>
    <property type="match status" value="1"/>
</dbReference>
<dbReference type="PANTHER" id="PTHR10093">
    <property type="entry name" value="IRON-SULFUR CLUSTER ASSEMBLY ENZYME NIFU HOMOLOG"/>
    <property type="match status" value="1"/>
</dbReference>
<dbReference type="Pfam" id="PF01592">
    <property type="entry name" value="NifU_N"/>
    <property type="match status" value="1"/>
</dbReference>
<dbReference type="SUPFAM" id="SSF82649">
    <property type="entry name" value="SufE/NifU"/>
    <property type="match status" value="1"/>
</dbReference>
<name>ISU1_ORYSJ</name>
<organism>
    <name type="scientific">Oryza sativa subsp. japonica</name>
    <name type="common">Rice</name>
    <dbReference type="NCBI Taxonomy" id="39947"/>
    <lineage>
        <taxon>Eukaryota</taxon>
        <taxon>Viridiplantae</taxon>
        <taxon>Streptophyta</taxon>
        <taxon>Embryophyta</taxon>
        <taxon>Tracheophyta</taxon>
        <taxon>Spermatophyta</taxon>
        <taxon>Magnoliopsida</taxon>
        <taxon>Liliopsida</taxon>
        <taxon>Poales</taxon>
        <taxon>Poaceae</taxon>
        <taxon>BOP clade</taxon>
        <taxon>Oryzoideae</taxon>
        <taxon>Oryzeae</taxon>
        <taxon>Oryzinae</taxon>
        <taxon>Oryza</taxon>
        <taxon>Oryza sativa</taxon>
    </lineage>
</organism>
<keyword id="KW-0001">2Fe-2S</keyword>
<keyword id="KW-0408">Iron</keyword>
<keyword id="KW-0411">Iron-sulfur</keyword>
<keyword id="KW-0479">Metal-binding</keyword>
<keyword id="KW-0496">Mitochondrion</keyword>
<keyword id="KW-1185">Reference proteome</keyword>
<keyword id="KW-0809">Transit peptide</keyword>
<sequence>MLRAGGRRLLAPGLRRVLGGGAAAPVAVGGAKAYHERVVDHYENPRNVGSFENDDPSVGTGLVGAPACGDVMKLQIRVDESSGKIVDACFKTFGCGSAIASSSVATEWVKGKQMEEVVTIKNTEIAKHLSLPPVKLHCSMLAEDAIKAAVKDYEAKKAKLAQKGEEKAAEA</sequence>